<comment type="function">
    <text evidence="1">Endonuclease that specifically degrades the RNA of RNA-DNA hybrids.</text>
</comment>
<comment type="catalytic activity">
    <reaction evidence="1">
        <text>Endonucleolytic cleavage to 5'-phosphomonoester.</text>
        <dbReference type="EC" id="3.1.26.4"/>
    </reaction>
</comment>
<comment type="cofactor">
    <cofactor evidence="1">
        <name>Mn(2+)</name>
        <dbReference type="ChEBI" id="CHEBI:29035"/>
    </cofactor>
    <cofactor evidence="1">
        <name>Mg(2+)</name>
        <dbReference type="ChEBI" id="CHEBI:18420"/>
    </cofactor>
    <text evidence="1">Manganese or magnesium. Binds 1 divalent metal ion per monomer in the absence of substrate. May bind a second metal ion after substrate binding.</text>
</comment>
<comment type="subcellular location">
    <subcellularLocation>
        <location evidence="1">Cytoplasm</location>
    </subcellularLocation>
</comment>
<comment type="similarity">
    <text evidence="1">Belongs to the RNase HII family.</text>
</comment>
<accession>Q87MF1</accession>
<evidence type="ECO:0000255" key="1">
    <source>
        <dbReference type="HAMAP-Rule" id="MF_00052"/>
    </source>
</evidence>
<evidence type="ECO:0000255" key="2">
    <source>
        <dbReference type="PROSITE-ProRule" id="PRU01319"/>
    </source>
</evidence>
<dbReference type="EC" id="3.1.26.4" evidence="1"/>
<dbReference type="EMBL" id="BA000031">
    <property type="protein sequence ID" value="BAC60567.1"/>
    <property type="molecule type" value="Genomic_DNA"/>
</dbReference>
<dbReference type="RefSeq" id="NP_798683.1">
    <property type="nucleotide sequence ID" value="NC_004603.1"/>
</dbReference>
<dbReference type="RefSeq" id="WP_005480979.1">
    <property type="nucleotide sequence ID" value="NC_004603.1"/>
</dbReference>
<dbReference type="SMR" id="Q87MF1"/>
<dbReference type="GeneID" id="65555219"/>
<dbReference type="KEGG" id="vpa:VP2304"/>
<dbReference type="PATRIC" id="fig|223926.6.peg.2206"/>
<dbReference type="eggNOG" id="COG0164">
    <property type="taxonomic scope" value="Bacteria"/>
</dbReference>
<dbReference type="HOGENOM" id="CLU_036532_3_2_6"/>
<dbReference type="Proteomes" id="UP000002493">
    <property type="component" value="Chromosome 1"/>
</dbReference>
<dbReference type="GO" id="GO:0005737">
    <property type="term" value="C:cytoplasm"/>
    <property type="evidence" value="ECO:0007669"/>
    <property type="project" value="UniProtKB-SubCell"/>
</dbReference>
<dbReference type="GO" id="GO:0032299">
    <property type="term" value="C:ribonuclease H2 complex"/>
    <property type="evidence" value="ECO:0007669"/>
    <property type="project" value="TreeGrafter"/>
</dbReference>
<dbReference type="GO" id="GO:0030145">
    <property type="term" value="F:manganese ion binding"/>
    <property type="evidence" value="ECO:0007669"/>
    <property type="project" value="UniProtKB-UniRule"/>
</dbReference>
<dbReference type="GO" id="GO:0003723">
    <property type="term" value="F:RNA binding"/>
    <property type="evidence" value="ECO:0007669"/>
    <property type="project" value="InterPro"/>
</dbReference>
<dbReference type="GO" id="GO:0004523">
    <property type="term" value="F:RNA-DNA hybrid ribonuclease activity"/>
    <property type="evidence" value="ECO:0007669"/>
    <property type="project" value="UniProtKB-UniRule"/>
</dbReference>
<dbReference type="GO" id="GO:0043137">
    <property type="term" value="P:DNA replication, removal of RNA primer"/>
    <property type="evidence" value="ECO:0007669"/>
    <property type="project" value="TreeGrafter"/>
</dbReference>
<dbReference type="GO" id="GO:0006298">
    <property type="term" value="P:mismatch repair"/>
    <property type="evidence" value="ECO:0007669"/>
    <property type="project" value="TreeGrafter"/>
</dbReference>
<dbReference type="CDD" id="cd07182">
    <property type="entry name" value="RNase_HII_bacteria_HII_like"/>
    <property type="match status" value="1"/>
</dbReference>
<dbReference type="FunFam" id="3.30.420.10:FF:000006">
    <property type="entry name" value="Ribonuclease HII"/>
    <property type="match status" value="1"/>
</dbReference>
<dbReference type="Gene3D" id="3.30.420.10">
    <property type="entry name" value="Ribonuclease H-like superfamily/Ribonuclease H"/>
    <property type="match status" value="1"/>
</dbReference>
<dbReference type="HAMAP" id="MF_00052_B">
    <property type="entry name" value="RNase_HII_B"/>
    <property type="match status" value="1"/>
</dbReference>
<dbReference type="InterPro" id="IPR022898">
    <property type="entry name" value="RNase_HII"/>
</dbReference>
<dbReference type="InterPro" id="IPR001352">
    <property type="entry name" value="RNase_HII/HIII"/>
</dbReference>
<dbReference type="InterPro" id="IPR024567">
    <property type="entry name" value="RNase_HII/HIII_dom"/>
</dbReference>
<dbReference type="InterPro" id="IPR012337">
    <property type="entry name" value="RNaseH-like_sf"/>
</dbReference>
<dbReference type="InterPro" id="IPR036397">
    <property type="entry name" value="RNaseH_sf"/>
</dbReference>
<dbReference type="NCBIfam" id="NF000594">
    <property type="entry name" value="PRK00015.1-1"/>
    <property type="match status" value="1"/>
</dbReference>
<dbReference type="NCBIfam" id="NF000595">
    <property type="entry name" value="PRK00015.1-3"/>
    <property type="match status" value="1"/>
</dbReference>
<dbReference type="NCBIfam" id="NF000596">
    <property type="entry name" value="PRK00015.1-4"/>
    <property type="match status" value="1"/>
</dbReference>
<dbReference type="PANTHER" id="PTHR10954">
    <property type="entry name" value="RIBONUCLEASE H2 SUBUNIT A"/>
    <property type="match status" value="1"/>
</dbReference>
<dbReference type="PANTHER" id="PTHR10954:SF18">
    <property type="entry name" value="RIBONUCLEASE HII"/>
    <property type="match status" value="1"/>
</dbReference>
<dbReference type="Pfam" id="PF01351">
    <property type="entry name" value="RNase_HII"/>
    <property type="match status" value="1"/>
</dbReference>
<dbReference type="SUPFAM" id="SSF53098">
    <property type="entry name" value="Ribonuclease H-like"/>
    <property type="match status" value="1"/>
</dbReference>
<dbReference type="PROSITE" id="PS51975">
    <property type="entry name" value="RNASE_H_2"/>
    <property type="match status" value="1"/>
</dbReference>
<proteinExistence type="inferred from homology"/>
<reference key="1">
    <citation type="journal article" date="2003" name="Lancet">
        <title>Genome sequence of Vibrio parahaemolyticus: a pathogenic mechanism distinct from that of V. cholerae.</title>
        <authorList>
            <person name="Makino K."/>
            <person name="Oshima K."/>
            <person name="Kurokawa K."/>
            <person name="Yokoyama K."/>
            <person name="Uda T."/>
            <person name="Tagomori K."/>
            <person name="Iijima Y."/>
            <person name="Najima M."/>
            <person name="Nakano M."/>
            <person name="Yamashita A."/>
            <person name="Kubota Y."/>
            <person name="Kimura S."/>
            <person name="Yasunaga T."/>
            <person name="Honda T."/>
            <person name="Shinagawa H."/>
            <person name="Hattori M."/>
            <person name="Iida T."/>
        </authorList>
    </citation>
    <scope>NUCLEOTIDE SEQUENCE [LARGE SCALE GENOMIC DNA]</scope>
    <source>
        <strain>RIMD 2210633</strain>
    </source>
</reference>
<organism>
    <name type="scientific">Vibrio parahaemolyticus serotype O3:K6 (strain RIMD 2210633)</name>
    <dbReference type="NCBI Taxonomy" id="223926"/>
    <lineage>
        <taxon>Bacteria</taxon>
        <taxon>Pseudomonadati</taxon>
        <taxon>Pseudomonadota</taxon>
        <taxon>Gammaproteobacteria</taxon>
        <taxon>Vibrionales</taxon>
        <taxon>Vibrionaceae</taxon>
        <taxon>Vibrio</taxon>
    </lineage>
</organism>
<feature type="chain" id="PRO_0000111649" description="Ribonuclease HII">
    <location>
        <begin position="1"/>
        <end position="211"/>
    </location>
</feature>
<feature type="domain" description="RNase H type-2" evidence="2">
    <location>
        <begin position="24"/>
        <end position="211"/>
    </location>
</feature>
<feature type="binding site" evidence="1">
    <location>
        <position position="30"/>
    </location>
    <ligand>
        <name>a divalent metal cation</name>
        <dbReference type="ChEBI" id="CHEBI:60240"/>
    </ligand>
</feature>
<feature type="binding site" evidence="1">
    <location>
        <position position="31"/>
    </location>
    <ligand>
        <name>a divalent metal cation</name>
        <dbReference type="ChEBI" id="CHEBI:60240"/>
    </ligand>
</feature>
<feature type="binding site" evidence="1">
    <location>
        <position position="122"/>
    </location>
    <ligand>
        <name>a divalent metal cation</name>
        <dbReference type="ChEBI" id="CHEBI:60240"/>
    </ligand>
</feature>
<protein>
    <recommendedName>
        <fullName evidence="1">Ribonuclease HII</fullName>
        <shortName evidence="1">RNase HII</shortName>
        <ecNumber evidence="1">3.1.26.4</ecNumber>
    </recommendedName>
</protein>
<sequence>MVAKAKTTKAKVELPPFEYPQGYQLIAGVDEVGRGPLVGDVVTAAVILDPNNPIEGLNDSKKLSEKKRLALLPEIKEKALAWAVGRCSPEEIDELNILQATMVAMQRAITGLKVQPDLALIDGNRCPELPMDSQAVVKGDLRVAEISAASIIAKVVRDQEMEELDKQYPQFGFAKHKGYPTKAHFEAIEQHGVISEHRKSFKPVKKALGLD</sequence>
<name>RNH2_VIBPA</name>
<keyword id="KW-0963">Cytoplasm</keyword>
<keyword id="KW-0255">Endonuclease</keyword>
<keyword id="KW-0378">Hydrolase</keyword>
<keyword id="KW-0464">Manganese</keyword>
<keyword id="KW-0479">Metal-binding</keyword>
<keyword id="KW-0540">Nuclease</keyword>
<gene>
    <name evidence="1" type="primary">rnhB</name>
    <name type="ordered locus">VP2304</name>
</gene>